<evidence type="ECO:0000305" key="1"/>
<reference key="1">
    <citation type="journal article" date="2004" name="Nature">
        <title>Genome evolution in yeasts.</title>
        <authorList>
            <person name="Dujon B."/>
            <person name="Sherman D."/>
            <person name="Fischer G."/>
            <person name="Durrens P."/>
            <person name="Casaregola S."/>
            <person name="Lafontaine I."/>
            <person name="de Montigny J."/>
            <person name="Marck C."/>
            <person name="Neuveglise C."/>
            <person name="Talla E."/>
            <person name="Goffard N."/>
            <person name="Frangeul L."/>
            <person name="Aigle M."/>
            <person name="Anthouard V."/>
            <person name="Babour A."/>
            <person name="Barbe V."/>
            <person name="Barnay S."/>
            <person name="Blanchin S."/>
            <person name="Beckerich J.-M."/>
            <person name="Beyne E."/>
            <person name="Bleykasten C."/>
            <person name="Boisrame A."/>
            <person name="Boyer J."/>
            <person name="Cattolico L."/>
            <person name="Confanioleri F."/>
            <person name="de Daruvar A."/>
            <person name="Despons L."/>
            <person name="Fabre E."/>
            <person name="Fairhead C."/>
            <person name="Ferry-Dumazet H."/>
            <person name="Groppi A."/>
            <person name="Hantraye F."/>
            <person name="Hennequin C."/>
            <person name="Jauniaux N."/>
            <person name="Joyet P."/>
            <person name="Kachouri R."/>
            <person name="Kerrest A."/>
            <person name="Koszul R."/>
            <person name="Lemaire M."/>
            <person name="Lesur I."/>
            <person name="Ma L."/>
            <person name="Muller H."/>
            <person name="Nicaud J.-M."/>
            <person name="Nikolski M."/>
            <person name="Oztas S."/>
            <person name="Ozier-Kalogeropoulos O."/>
            <person name="Pellenz S."/>
            <person name="Potier S."/>
            <person name="Richard G.-F."/>
            <person name="Straub M.-L."/>
            <person name="Suleau A."/>
            <person name="Swennen D."/>
            <person name="Tekaia F."/>
            <person name="Wesolowski-Louvel M."/>
            <person name="Westhof E."/>
            <person name="Wirth B."/>
            <person name="Zeniou-Meyer M."/>
            <person name="Zivanovic Y."/>
            <person name="Bolotin-Fukuhara M."/>
            <person name="Thierry A."/>
            <person name="Bouchier C."/>
            <person name="Caudron B."/>
            <person name="Scarpelli C."/>
            <person name="Gaillardin C."/>
            <person name="Weissenbach J."/>
            <person name="Wincker P."/>
            <person name="Souciet J.-L."/>
        </authorList>
    </citation>
    <scope>NUCLEOTIDE SEQUENCE [LARGE SCALE GENOMIC DNA]</scope>
    <source>
        <strain>ATCC 8585 / CBS 2359 / DSM 70799 / NBRC 1267 / NRRL Y-1140 / WM37</strain>
    </source>
</reference>
<organism>
    <name type="scientific">Kluyveromyces lactis (strain ATCC 8585 / CBS 2359 / DSM 70799 / NBRC 1267 / NRRL Y-1140 / WM37)</name>
    <name type="common">Yeast</name>
    <name type="synonym">Candida sphaerica</name>
    <dbReference type="NCBI Taxonomy" id="284590"/>
    <lineage>
        <taxon>Eukaryota</taxon>
        <taxon>Fungi</taxon>
        <taxon>Dikarya</taxon>
        <taxon>Ascomycota</taxon>
        <taxon>Saccharomycotina</taxon>
        <taxon>Saccharomycetes</taxon>
        <taxon>Saccharomycetales</taxon>
        <taxon>Saccharomycetaceae</taxon>
        <taxon>Kluyveromyces</taxon>
    </lineage>
</organism>
<accession>Q6CLR6</accession>
<protein>
    <recommendedName>
        <fullName>Imidazoleglycerol-phosphate dehydratase</fullName>
        <shortName>IGPD</shortName>
        <ecNumber>4.2.1.19</ecNumber>
    </recommendedName>
</protein>
<dbReference type="EC" id="4.2.1.19"/>
<dbReference type="EMBL" id="CR382126">
    <property type="protein sequence ID" value="CAG97830.1"/>
    <property type="molecule type" value="Genomic_DNA"/>
</dbReference>
<dbReference type="RefSeq" id="XP_455123.1">
    <property type="nucleotide sequence ID" value="XM_455123.1"/>
</dbReference>
<dbReference type="SMR" id="Q6CLR6"/>
<dbReference type="FunCoup" id="Q6CLR6">
    <property type="interactions" value="269"/>
</dbReference>
<dbReference type="STRING" id="284590.Q6CLR6"/>
<dbReference type="PaxDb" id="284590-Q6CLR6"/>
<dbReference type="KEGG" id="kla:KLLA0_F00968g"/>
<dbReference type="eggNOG" id="KOG3143">
    <property type="taxonomic scope" value="Eukaryota"/>
</dbReference>
<dbReference type="HOGENOM" id="CLU_044308_3_0_1"/>
<dbReference type="InParanoid" id="Q6CLR6"/>
<dbReference type="OMA" id="GIPFFDH"/>
<dbReference type="UniPathway" id="UPA00031">
    <property type="reaction ID" value="UER00011"/>
</dbReference>
<dbReference type="Proteomes" id="UP000000598">
    <property type="component" value="Chromosome F"/>
</dbReference>
<dbReference type="GO" id="GO:0004424">
    <property type="term" value="F:imidazoleglycerol-phosphate dehydratase activity"/>
    <property type="evidence" value="ECO:0007669"/>
    <property type="project" value="UniProtKB-EC"/>
</dbReference>
<dbReference type="GO" id="GO:0000105">
    <property type="term" value="P:L-histidine biosynthetic process"/>
    <property type="evidence" value="ECO:0007669"/>
    <property type="project" value="UniProtKB-UniPathway"/>
</dbReference>
<dbReference type="CDD" id="cd07914">
    <property type="entry name" value="IGPD"/>
    <property type="match status" value="1"/>
</dbReference>
<dbReference type="FunFam" id="3.30.230.40:FF:000005">
    <property type="entry name" value="Imidazoleglycerol-phosphate dehydratase"/>
    <property type="match status" value="1"/>
</dbReference>
<dbReference type="FunFam" id="3.30.230.40:FF:000001">
    <property type="entry name" value="Imidazoleglycerol-phosphate dehydratase HisB"/>
    <property type="match status" value="1"/>
</dbReference>
<dbReference type="Gene3D" id="3.30.230.40">
    <property type="entry name" value="Imidazole glycerol phosphate dehydratase, domain 1"/>
    <property type="match status" value="2"/>
</dbReference>
<dbReference type="HAMAP" id="MF_00076">
    <property type="entry name" value="HisB"/>
    <property type="match status" value="1"/>
</dbReference>
<dbReference type="InterPro" id="IPR038494">
    <property type="entry name" value="IGPD_sf"/>
</dbReference>
<dbReference type="InterPro" id="IPR000807">
    <property type="entry name" value="ImidazoleglycerolP_deHydtase"/>
</dbReference>
<dbReference type="InterPro" id="IPR020565">
    <property type="entry name" value="ImidazoleglycerP_deHydtase_CS"/>
</dbReference>
<dbReference type="InterPro" id="IPR020568">
    <property type="entry name" value="Ribosomal_Su5_D2-typ_SF"/>
</dbReference>
<dbReference type="NCBIfam" id="NF002114">
    <property type="entry name" value="PRK00951.2-4"/>
    <property type="match status" value="1"/>
</dbReference>
<dbReference type="PANTHER" id="PTHR23133:SF2">
    <property type="entry name" value="IMIDAZOLEGLYCEROL-PHOSPHATE DEHYDRATASE"/>
    <property type="match status" value="1"/>
</dbReference>
<dbReference type="PANTHER" id="PTHR23133">
    <property type="entry name" value="IMIDAZOLEGLYCEROL-PHOSPHATE DEHYDRATASE HIS7"/>
    <property type="match status" value="1"/>
</dbReference>
<dbReference type="Pfam" id="PF00475">
    <property type="entry name" value="IGPD"/>
    <property type="match status" value="1"/>
</dbReference>
<dbReference type="SUPFAM" id="SSF54211">
    <property type="entry name" value="Ribosomal protein S5 domain 2-like"/>
    <property type="match status" value="2"/>
</dbReference>
<dbReference type="PROSITE" id="PS00954">
    <property type="entry name" value="IGP_DEHYDRATASE_1"/>
    <property type="match status" value="1"/>
</dbReference>
<dbReference type="PROSITE" id="PS00955">
    <property type="entry name" value="IGP_DEHYDRATASE_2"/>
    <property type="match status" value="1"/>
</dbReference>
<sequence length="221" mass="24084">MTYPERKAFVSRITNETKIQIAISLNGGPISIENSILQREESDAAKQVTGSQIIDIQTGVGFLDHMIHALAKHSGWSLIVECIGDLHIDDHHTTEDCGIALGQAFKEALGHVRGVKRFGSGYAPLDEALSRAVVDLSNRPYAVIELGLKREKIGDLSCEMIPHFLESFAEAARITLHVDCLRGFNDHHRSESAFKALAIAIKEAISSNGTNDVPSTKGVLM</sequence>
<feature type="chain" id="PRO_0000158237" description="Imidazoleglycerol-phosphate dehydratase">
    <location>
        <begin position="1"/>
        <end position="221"/>
    </location>
</feature>
<name>HIS7_KLULA</name>
<comment type="catalytic activity">
    <reaction>
        <text>D-erythro-1-(imidazol-4-yl)glycerol 3-phosphate = 3-(imidazol-4-yl)-2-oxopropyl phosphate + H2O</text>
        <dbReference type="Rhea" id="RHEA:11040"/>
        <dbReference type="ChEBI" id="CHEBI:15377"/>
        <dbReference type="ChEBI" id="CHEBI:57766"/>
        <dbReference type="ChEBI" id="CHEBI:58278"/>
        <dbReference type="EC" id="4.2.1.19"/>
    </reaction>
</comment>
<comment type="pathway">
    <text>Amino-acid biosynthesis; L-histidine biosynthesis; L-histidine from 5-phospho-alpha-D-ribose 1-diphosphate: step 6/9.</text>
</comment>
<comment type="similarity">
    <text evidence="1">Belongs to the imidazoleglycerol-phosphate dehydratase family.</text>
</comment>
<proteinExistence type="inferred from homology"/>
<gene>
    <name type="primary">HIS3</name>
    <name type="ordered locus">KLLA0F00968g</name>
</gene>
<keyword id="KW-0028">Amino-acid biosynthesis</keyword>
<keyword id="KW-0368">Histidine biosynthesis</keyword>
<keyword id="KW-0456">Lyase</keyword>
<keyword id="KW-1185">Reference proteome</keyword>